<accession>Q821W9</accession>
<dbReference type="EMBL" id="AE015925">
    <property type="protein sequence ID" value="AAP05557.1"/>
    <property type="molecule type" value="Genomic_DNA"/>
</dbReference>
<dbReference type="RefSeq" id="WP_011006771.1">
    <property type="nucleotide sequence ID" value="NC_003361.3"/>
</dbReference>
<dbReference type="SMR" id="Q821W9"/>
<dbReference type="STRING" id="227941.CCA_00816"/>
<dbReference type="KEGG" id="cca:CCA_00816"/>
<dbReference type="eggNOG" id="COG0359">
    <property type="taxonomic scope" value="Bacteria"/>
</dbReference>
<dbReference type="HOGENOM" id="CLU_078938_3_0_0"/>
<dbReference type="OrthoDB" id="9788336at2"/>
<dbReference type="Proteomes" id="UP000002193">
    <property type="component" value="Chromosome"/>
</dbReference>
<dbReference type="GO" id="GO:1990904">
    <property type="term" value="C:ribonucleoprotein complex"/>
    <property type="evidence" value="ECO:0007669"/>
    <property type="project" value="UniProtKB-KW"/>
</dbReference>
<dbReference type="GO" id="GO:0005840">
    <property type="term" value="C:ribosome"/>
    <property type="evidence" value="ECO:0007669"/>
    <property type="project" value="UniProtKB-KW"/>
</dbReference>
<dbReference type="GO" id="GO:0019843">
    <property type="term" value="F:rRNA binding"/>
    <property type="evidence" value="ECO:0007669"/>
    <property type="project" value="UniProtKB-UniRule"/>
</dbReference>
<dbReference type="GO" id="GO:0003735">
    <property type="term" value="F:structural constituent of ribosome"/>
    <property type="evidence" value="ECO:0007669"/>
    <property type="project" value="InterPro"/>
</dbReference>
<dbReference type="GO" id="GO:0006412">
    <property type="term" value="P:translation"/>
    <property type="evidence" value="ECO:0007669"/>
    <property type="project" value="UniProtKB-UniRule"/>
</dbReference>
<dbReference type="Gene3D" id="3.10.430.100">
    <property type="entry name" value="Ribosomal protein L9, C-terminal domain"/>
    <property type="match status" value="1"/>
</dbReference>
<dbReference type="Gene3D" id="3.40.5.10">
    <property type="entry name" value="Ribosomal protein L9, N-terminal domain"/>
    <property type="match status" value="1"/>
</dbReference>
<dbReference type="HAMAP" id="MF_00503">
    <property type="entry name" value="Ribosomal_bL9"/>
    <property type="match status" value="1"/>
</dbReference>
<dbReference type="InterPro" id="IPR000244">
    <property type="entry name" value="Ribosomal_bL9"/>
</dbReference>
<dbReference type="InterPro" id="IPR009027">
    <property type="entry name" value="Ribosomal_bL9/RNase_H1_N"/>
</dbReference>
<dbReference type="InterPro" id="IPR020594">
    <property type="entry name" value="Ribosomal_bL9_bac/chp"/>
</dbReference>
<dbReference type="InterPro" id="IPR020069">
    <property type="entry name" value="Ribosomal_bL9_C"/>
</dbReference>
<dbReference type="InterPro" id="IPR036791">
    <property type="entry name" value="Ribosomal_bL9_C_sf"/>
</dbReference>
<dbReference type="InterPro" id="IPR020070">
    <property type="entry name" value="Ribosomal_bL9_N"/>
</dbReference>
<dbReference type="InterPro" id="IPR036935">
    <property type="entry name" value="Ribosomal_bL9_N_sf"/>
</dbReference>
<dbReference type="NCBIfam" id="TIGR00158">
    <property type="entry name" value="L9"/>
    <property type="match status" value="1"/>
</dbReference>
<dbReference type="PANTHER" id="PTHR21368">
    <property type="entry name" value="50S RIBOSOMAL PROTEIN L9"/>
    <property type="match status" value="1"/>
</dbReference>
<dbReference type="Pfam" id="PF03948">
    <property type="entry name" value="Ribosomal_L9_C"/>
    <property type="match status" value="1"/>
</dbReference>
<dbReference type="Pfam" id="PF01281">
    <property type="entry name" value="Ribosomal_L9_N"/>
    <property type="match status" value="1"/>
</dbReference>
<dbReference type="SUPFAM" id="SSF55658">
    <property type="entry name" value="L9 N-domain-like"/>
    <property type="match status" value="1"/>
</dbReference>
<dbReference type="SUPFAM" id="SSF55653">
    <property type="entry name" value="Ribosomal protein L9 C-domain"/>
    <property type="match status" value="1"/>
</dbReference>
<dbReference type="PROSITE" id="PS00651">
    <property type="entry name" value="RIBOSOMAL_L9"/>
    <property type="match status" value="1"/>
</dbReference>
<sequence length="172" mass="19134">MKQQLLLLEDVDGLGRSGDIVTARPGYVRNYLMPQKKAVIAGAGTLRLQAKLKEERLLRAAEDRAESEKLAEALRDVILEFQVRVDPDNNMYGSVTISDIIDEAAKKNIILTRKNFPHSHYAIKNLGKKSVPLKLKEDVTATLFVEVSSESSYVAVLNQQPTQEEPAAEESN</sequence>
<gene>
    <name evidence="1" type="primary">rplI</name>
    <name type="ordered locus">CCA_00816</name>
</gene>
<name>RL9_CHLCV</name>
<keyword id="KW-0687">Ribonucleoprotein</keyword>
<keyword id="KW-0689">Ribosomal protein</keyword>
<keyword id="KW-0694">RNA-binding</keyword>
<keyword id="KW-0699">rRNA-binding</keyword>
<evidence type="ECO:0000255" key="1">
    <source>
        <dbReference type="HAMAP-Rule" id="MF_00503"/>
    </source>
</evidence>
<evidence type="ECO:0000305" key="2"/>
<proteinExistence type="inferred from homology"/>
<feature type="chain" id="PRO_0000176627" description="Large ribosomal subunit protein bL9">
    <location>
        <begin position="1"/>
        <end position="172"/>
    </location>
</feature>
<protein>
    <recommendedName>
        <fullName evidence="1">Large ribosomal subunit protein bL9</fullName>
    </recommendedName>
    <alternativeName>
        <fullName evidence="2">50S ribosomal protein L9</fullName>
    </alternativeName>
</protein>
<reference key="1">
    <citation type="journal article" date="2003" name="Nucleic Acids Res.">
        <title>Genome sequence of Chlamydophila caviae (Chlamydia psittaci GPIC): examining the role of niche-specific genes in the evolution of the Chlamydiaceae.</title>
        <authorList>
            <person name="Read T.D."/>
            <person name="Myers G.S.A."/>
            <person name="Brunham R.C."/>
            <person name="Nelson W.C."/>
            <person name="Paulsen I.T."/>
            <person name="Heidelberg J.F."/>
            <person name="Holtzapple E.K."/>
            <person name="Khouri H.M."/>
            <person name="Federova N.B."/>
            <person name="Carty H.A."/>
            <person name="Umayam L.A."/>
            <person name="Haft D.H."/>
            <person name="Peterson J.D."/>
            <person name="Beanan M.J."/>
            <person name="White O."/>
            <person name="Salzberg S.L."/>
            <person name="Hsia R.-C."/>
            <person name="McClarty G."/>
            <person name="Rank R.G."/>
            <person name="Bavoil P.M."/>
            <person name="Fraser C.M."/>
        </authorList>
    </citation>
    <scope>NUCLEOTIDE SEQUENCE [LARGE SCALE GENOMIC DNA]</scope>
    <source>
        <strain>ATCC VR-813 / DSM 19441 / 03DC25 / GPIC</strain>
    </source>
</reference>
<organism>
    <name type="scientific">Chlamydia caviae (strain ATCC VR-813 / DSM 19441 / 03DC25 / GPIC)</name>
    <name type="common">Chlamydophila caviae</name>
    <dbReference type="NCBI Taxonomy" id="227941"/>
    <lineage>
        <taxon>Bacteria</taxon>
        <taxon>Pseudomonadati</taxon>
        <taxon>Chlamydiota</taxon>
        <taxon>Chlamydiia</taxon>
        <taxon>Chlamydiales</taxon>
        <taxon>Chlamydiaceae</taxon>
        <taxon>Chlamydia/Chlamydophila group</taxon>
        <taxon>Chlamydia</taxon>
    </lineage>
</organism>
<comment type="function">
    <text evidence="1">Binds to the 23S rRNA.</text>
</comment>
<comment type="similarity">
    <text evidence="1">Belongs to the bacterial ribosomal protein bL9 family.</text>
</comment>